<evidence type="ECO:0000255" key="1">
    <source>
        <dbReference type="PROSITE-ProRule" id="PRU00405"/>
    </source>
</evidence>
<evidence type="ECO:0000256" key="2">
    <source>
        <dbReference type="SAM" id="MobiDB-lite"/>
    </source>
</evidence>
<protein>
    <recommendedName>
        <fullName>Retrotransposable element SLACS 132 kDa protein</fullName>
    </recommendedName>
    <alternativeName>
        <fullName>ORF2</fullName>
    </alternativeName>
    <domain>
        <recommendedName>
            <fullName>Reverse transcriptase</fullName>
            <ecNumber>2.7.7.49</ecNumber>
        </recommendedName>
    </domain>
</protein>
<name>RTP2_TRYBG</name>
<reference key="1">
    <citation type="journal article" date="1990" name="Nucleic Acids Res.">
        <title>SLACS retrotransposon from Trypanosoma brucei gambiense is similar to mammalian LINEs.</title>
        <authorList>
            <person name="Aksoy S."/>
            <person name="Williams S."/>
            <person name="Chang S."/>
            <person name="Richards F.F."/>
        </authorList>
    </citation>
    <scope>NUCLEOTIDE SEQUENCE [GENOMIC DNA]</scope>
</reference>
<dbReference type="EC" id="2.7.7.49"/>
<dbReference type="EMBL" id="X17078">
    <property type="protein sequence ID" value="CAA34931.1"/>
    <property type="molecule type" value="Genomic_DNA"/>
</dbReference>
<dbReference type="PIR" id="S14916">
    <property type="entry name" value="S14916"/>
</dbReference>
<dbReference type="GO" id="GO:0003964">
    <property type="term" value="F:RNA-directed DNA polymerase activity"/>
    <property type="evidence" value="ECO:0007669"/>
    <property type="project" value="UniProtKB-KW"/>
</dbReference>
<dbReference type="CDD" id="cd01650">
    <property type="entry name" value="RT_nLTR_like"/>
    <property type="match status" value="1"/>
</dbReference>
<dbReference type="InterPro" id="IPR043502">
    <property type="entry name" value="DNA/RNA_pol_sf"/>
</dbReference>
<dbReference type="InterPro" id="IPR000477">
    <property type="entry name" value="RT_dom"/>
</dbReference>
<dbReference type="PANTHER" id="PTHR19446">
    <property type="entry name" value="REVERSE TRANSCRIPTASES"/>
    <property type="match status" value="1"/>
</dbReference>
<dbReference type="Pfam" id="PF00078">
    <property type="entry name" value="RVT_1"/>
    <property type="match status" value="1"/>
</dbReference>
<dbReference type="SUPFAM" id="SSF56672">
    <property type="entry name" value="DNA/RNA polymerases"/>
    <property type="match status" value="1"/>
</dbReference>
<dbReference type="PROSITE" id="PS50878">
    <property type="entry name" value="RT_POL"/>
    <property type="match status" value="1"/>
</dbReference>
<comment type="catalytic activity">
    <reaction evidence="1">
        <text>DNA(n) + a 2'-deoxyribonucleoside 5'-triphosphate = DNA(n+1) + diphosphate</text>
        <dbReference type="Rhea" id="RHEA:22508"/>
        <dbReference type="Rhea" id="RHEA-COMP:17339"/>
        <dbReference type="Rhea" id="RHEA-COMP:17340"/>
        <dbReference type="ChEBI" id="CHEBI:33019"/>
        <dbReference type="ChEBI" id="CHEBI:61560"/>
        <dbReference type="ChEBI" id="CHEBI:173112"/>
        <dbReference type="EC" id="2.7.7.49"/>
    </reaction>
</comment>
<proteinExistence type="predicted"/>
<accession>P15594</accession>
<keyword id="KW-0548">Nucleotidyltransferase</keyword>
<keyword id="KW-0695">RNA-directed DNA polymerase</keyword>
<keyword id="KW-0808">Transferase</keyword>
<keyword id="KW-0814">Transposable element</keyword>
<sequence>MEGPSNPGENLGIISVNPNTCESIELTNQILAKTYTTSWTDMEVYARGNGRICTAYPDVDHPLQDVRGNVSSILERGERSGGFETHPPRDPVTPRERHGNIQTRGAVIAPTPFHVVAAIPQQTRKRRWDILDGMVRRTVSQSTVDPKTVVMCVYRREEEETYDVLDEEEQDDDLLGIPNPTPRRLRISQAGPQQNSWVDTRGRRAYGSQEEQDERTSTDQVSIFSHDETRELSSPLECPIVGCTASFVGPRRWEKAKSHIYGVHSLEEVREIPRGELICKGIVRCETCATLLPTSDRAKQAHRDDCRPYLPRKENIRRKRAAEREATEASAQQGIALRLERQGPYITPRDIEEPTNTTTESWWREKVATKRYLHRKEWPQWLDICRTVLLGYSASSQGERHQRQVMLLDLVRNHLHTRTARREQQQQRGKDNQEEEDRQKKEEKSLRNAWKPCASSVRQGGQPSSSQPKRLNRWSTAPKWLKQSGNCTRRRISMIFPGPPVEQPGVVSVDAEEVAKTIARRLTRGAAPGLDGWTRELLYPLTLDPALKMEIAAVVKDIINADVSMEVGRRLQATSLTVLRKPNGKYRPIGAESVWAKLASHIAISRVMKTAEKKFSGIQFGVGGHIEEAIAKIRKDFATKGSLAMLDGRNAYNAISRRAILEAVYGDSTWSPLWRLVSLLLGTTGEVGFYENGKLCHTWESTRGVRQGMVLGPLLFSIGTLATLRRLQQTFPEAQFTAYLDDVTVAAPPEELKNVCAATAEAMEALGIVNNADKTEVLELTGDTGFGTAVKRVREFLERTWPDPMSEEIREGVEKKAMETDRLFKAIVELPLYNRTRWRILAMSAMPRITFLLRNHDMQHTHRVASWFDERTTQVMEHILGQPMTERARNIAALPVSMGGCGIRRMAQVAEYAHQCAGEKGLQQRKTEEADQRQQDDLYATLGGADRQVFTANTAAGAGRPLTDAQVRLDDATFGVYLRERYCRVLPEGVKCLCGEDASNHHIHTGTKVHNKPRQMRHDIINSVFANGLRLCGFQCATEPRLNEVSKRRPDILIAGLDTYAVTDITVTYPGRVTVGNTAQGQRSVAAADPMKAALVAFQEKERKYSYWAIQNGLAFAPFVMLTNGAIFGKSRDWLRRVLRGQDHRLTVTTAFDGITADVVAAVLRGNVHVYSAAQARGETLR</sequence>
<feature type="chain" id="PRO_0000097521" description="Retrotransposable element SLACS 132 kDa protein">
    <location>
        <begin position="1"/>
        <end position="1182"/>
    </location>
</feature>
<feature type="domain" description="Reverse transcriptase" evidence="1">
    <location>
        <begin position="560"/>
        <end position="790"/>
    </location>
</feature>
<feature type="region of interest" description="Disordered" evidence="2">
    <location>
        <begin position="77"/>
        <end position="97"/>
    </location>
</feature>
<feature type="region of interest" description="Disordered" evidence="2">
    <location>
        <begin position="163"/>
        <end position="220"/>
    </location>
</feature>
<feature type="region of interest" description="Disordered" evidence="2">
    <location>
        <begin position="317"/>
        <end position="339"/>
    </location>
</feature>
<feature type="region of interest" description="Disordered" evidence="2">
    <location>
        <begin position="418"/>
        <end position="478"/>
    </location>
</feature>
<feature type="compositionally biased region" description="Acidic residues" evidence="2">
    <location>
        <begin position="163"/>
        <end position="174"/>
    </location>
</feature>
<feature type="compositionally biased region" description="Basic and acidic residues" evidence="2">
    <location>
        <begin position="420"/>
        <end position="446"/>
    </location>
</feature>
<feature type="compositionally biased region" description="Polar residues" evidence="2">
    <location>
        <begin position="456"/>
        <end position="475"/>
    </location>
</feature>
<organism>
    <name type="scientific">Trypanosoma brucei gambiense</name>
    <dbReference type="NCBI Taxonomy" id="31285"/>
    <lineage>
        <taxon>Eukaryota</taxon>
        <taxon>Discoba</taxon>
        <taxon>Euglenozoa</taxon>
        <taxon>Kinetoplastea</taxon>
        <taxon>Metakinetoplastina</taxon>
        <taxon>Trypanosomatida</taxon>
        <taxon>Trypanosomatidae</taxon>
        <taxon>Trypanosoma</taxon>
    </lineage>
</organism>